<keyword id="KW-0004">4Fe-4S</keyword>
<keyword id="KW-0408">Iron</keyword>
<keyword id="KW-0411">Iron-sulfur</keyword>
<keyword id="KW-0456">Lyase</keyword>
<keyword id="KW-0479">Metal-binding</keyword>
<keyword id="KW-0949">S-adenosyl-L-methionine</keyword>
<keyword id="KW-0784">Thiamine biosynthesis</keyword>
<keyword id="KW-0862">Zinc</keyword>
<comment type="function">
    <text evidence="1">Catalyzes the synthesis of the hydroxymethylpyrimidine phosphate (HMP-P) moiety of thiamine from aminoimidazole ribotide (AIR) in a radical S-adenosyl-L-methionine (SAM)-dependent reaction.</text>
</comment>
<comment type="catalytic activity">
    <reaction evidence="1">
        <text>5-amino-1-(5-phospho-beta-D-ribosyl)imidazole + S-adenosyl-L-methionine = 4-amino-2-methyl-5-(phosphooxymethyl)pyrimidine + CO + 5'-deoxyadenosine + formate + L-methionine + 3 H(+)</text>
        <dbReference type="Rhea" id="RHEA:24840"/>
        <dbReference type="ChEBI" id="CHEBI:15378"/>
        <dbReference type="ChEBI" id="CHEBI:15740"/>
        <dbReference type="ChEBI" id="CHEBI:17245"/>
        <dbReference type="ChEBI" id="CHEBI:17319"/>
        <dbReference type="ChEBI" id="CHEBI:57844"/>
        <dbReference type="ChEBI" id="CHEBI:58354"/>
        <dbReference type="ChEBI" id="CHEBI:59789"/>
        <dbReference type="ChEBI" id="CHEBI:137981"/>
        <dbReference type="EC" id="4.1.99.17"/>
    </reaction>
</comment>
<comment type="cofactor">
    <cofactor evidence="1">
        <name>[4Fe-4S] cluster</name>
        <dbReference type="ChEBI" id="CHEBI:49883"/>
    </cofactor>
    <text evidence="1">Binds 1 [4Fe-4S] cluster per subunit. The cluster is coordinated with 3 cysteines and an exchangeable S-adenosyl-L-methionine.</text>
</comment>
<comment type="pathway">
    <text evidence="1">Cofactor biosynthesis; thiamine diphosphate biosynthesis.</text>
</comment>
<comment type="subunit">
    <text evidence="1">Homodimer.</text>
</comment>
<comment type="similarity">
    <text evidence="1">Belongs to the ThiC family.</text>
</comment>
<reference key="1">
    <citation type="journal article" date="2004" name="Nucleic Acids Res.">
        <title>Unique features revealed by the genome sequence of Acinetobacter sp. ADP1, a versatile and naturally transformation competent bacterium.</title>
        <authorList>
            <person name="Barbe V."/>
            <person name="Vallenet D."/>
            <person name="Fonknechten N."/>
            <person name="Kreimeyer A."/>
            <person name="Oztas S."/>
            <person name="Labarre L."/>
            <person name="Cruveiller S."/>
            <person name="Robert C."/>
            <person name="Duprat S."/>
            <person name="Wincker P."/>
            <person name="Ornston L.N."/>
            <person name="Weissenbach J."/>
            <person name="Marliere P."/>
            <person name="Cohen G.N."/>
            <person name="Medigue C."/>
        </authorList>
    </citation>
    <scope>NUCLEOTIDE SEQUENCE [LARGE SCALE GENOMIC DNA]</scope>
    <source>
        <strain>ATCC 33305 / BD413 / ADP1</strain>
    </source>
</reference>
<proteinExistence type="inferred from homology"/>
<feature type="chain" id="PRO_0000242231" description="Phosphomethylpyrimidine synthase">
    <location>
        <begin position="1"/>
        <end position="631"/>
    </location>
</feature>
<feature type="binding site" evidence="1">
    <location>
        <position position="231"/>
    </location>
    <ligand>
        <name>substrate</name>
    </ligand>
</feature>
<feature type="binding site" evidence="1">
    <location>
        <position position="260"/>
    </location>
    <ligand>
        <name>substrate</name>
    </ligand>
</feature>
<feature type="binding site" evidence="1">
    <location>
        <position position="289"/>
    </location>
    <ligand>
        <name>substrate</name>
    </ligand>
</feature>
<feature type="binding site" evidence="1">
    <location>
        <position position="325"/>
    </location>
    <ligand>
        <name>substrate</name>
    </ligand>
</feature>
<feature type="binding site" evidence="1">
    <location>
        <begin position="345"/>
        <end position="347"/>
    </location>
    <ligand>
        <name>substrate</name>
    </ligand>
</feature>
<feature type="binding site" evidence="1">
    <location>
        <begin position="386"/>
        <end position="389"/>
    </location>
    <ligand>
        <name>substrate</name>
    </ligand>
</feature>
<feature type="binding site" evidence="1">
    <location>
        <position position="425"/>
    </location>
    <ligand>
        <name>substrate</name>
    </ligand>
</feature>
<feature type="binding site" evidence="1">
    <location>
        <position position="429"/>
    </location>
    <ligand>
        <name>Zn(2+)</name>
        <dbReference type="ChEBI" id="CHEBI:29105"/>
    </ligand>
</feature>
<feature type="binding site" evidence="1">
    <location>
        <position position="452"/>
    </location>
    <ligand>
        <name>substrate</name>
    </ligand>
</feature>
<feature type="binding site" evidence="1">
    <location>
        <position position="493"/>
    </location>
    <ligand>
        <name>Zn(2+)</name>
        <dbReference type="ChEBI" id="CHEBI:29105"/>
    </ligand>
</feature>
<feature type="binding site" evidence="1">
    <location>
        <position position="573"/>
    </location>
    <ligand>
        <name>[4Fe-4S] cluster</name>
        <dbReference type="ChEBI" id="CHEBI:49883"/>
        <note>4Fe-4S-S-AdoMet</note>
    </ligand>
</feature>
<feature type="binding site" evidence="1">
    <location>
        <position position="576"/>
    </location>
    <ligand>
        <name>[4Fe-4S] cluster</name>
        <dbReference type="ChEBI" id="CHEBI:49883"/>
        <note>4Fe-4S-S-AdoMet</note>
    </ligand>
</feature>
<feature type="binding site" evidence="1">
    <location>
        <position position="581"/>
    </location>
    <ligand>
        <name>[4Fe-4S] cluster</name>
        <dbReference type="ChEBI" id="CHEBI:49883"/>
        <note>4Fe-4S-S-AdoMet</note>
    </ligand>
</feature>
<evidence type="ECO:0000255" key="1">
    <source>
        <dbReference type="HAMAP-Rule" id="MF_00089"/>
    </source>
</evidence>
<gene>
    <name evidence="1" type="primary">thiC</name>
    <name type="ordered locus">ACIAD0276</name>
</gene>
<organism>
    <name type="scientific">Acinetobacter baylyi (strain ATCC 33305 / BD413 / ADP1)</name>
    <dbReference type="NCBI Taxonomy" id="62977"/>
    <lineage>
        <taxon>Bacteria</taxon>
        <taxon>Pseudomonadati</taxon>
        <taxon>Pseudomonadota</taxon>
        <taxon>Gammaproteobacteria</taxon>
        <taxon>Moraxellales</taxon>
        <taxon>Moraxellaceae</taxon>
        <taxon>Acinetobacter</taxon>
    </lineage>
</organism>
<accession>Q6FFB6</accession>
<dbReference type="EC" id="4.1.99.17" evidence="1"/>
<dbReference type="EMBL" id="CR543861">
    <property type="protein sequence ID" value="CAG67241.1"/>
    <property type="molecule type" value="Genomic_DNA"/>
</dbReference>
<dbReference type="RefSeq" id="WP_004920677.1">
    <property type="nucleotide sequence ID" value="NC_005966.1"/>
</dbReference>
<dbReference type="SMR" id="Q6FFB6"/>
<dbReference type="STRING" id="202950.GCA_001485005_00550"/>
<dbReference type="GeneID" id="45232790"/>
<dbReference type="KEGG" id="aci:ACIAD0276"/>
<dbReference type="eggNOG" id="COG0422">
    <property type="taxonomic scope" value="Bacteria"/>
</dbReference>
<dbReference type="HOGENOM" id="CLU_013181_2_1_6"/>
<dbReference type="OrthoDB" id="9805897at2"/>
<dbReference type="BioCyc" id="ASP62977:ACIAD_RS01305-MONOMER"/>
<dbReference type="UniPathway" id="UPA00060"/>
<dbReference type="Proteomes" id="UP000000430">
    <property type="component" value="Chromosome"/>
</dbReference>
<dbReference type="GO" id="GO:0005829">
    <property type="term" value="C:cytosol"/>
    <property type="evidence" value="ECO:0007669"/>
    <property type="project" value="TreeGrafter"/>
</dbReference>
<dbReference type="GO" id="GO:0051539">
    <property type="term" value="F:4 iron, 4 sulfur cluster binding"/>
    <property type="evidence" value="ECO:0007669"/>
    <property type="project" value="UniProtKB-KW"/>
</dbReference>
<dbReference type="GO" id="GO:0016830">
    <property type="term" value="F:carbon-carbon lyase activity"/>
    <property type="evidence" value="ECO:0007669"/>
    <property type="project" value="InterPro"/>
</dbReference>
<dbReference type="GO" id="GO:0008270">
    <property type="term" value="F:zinc ion binding"/>
    <property type="evidence" value="ECO:0007669"/>
    <property type="project" value="UniProtKB-UniRule"/>
</dbReference>
<dbReference type="GO" id="GO:0009228">
    <property type="term" value="P:thiamine biosynthetic process"/>
    <property type="evidence" value="ECO:0007669"/>
    <property type="project" value="UniProtKB-KW"/>
</dbReference>
<dbReference type="GO" id="GO:0009229">
    <property type="term" value="P:thiamine diphosphate biosynthetic process"/>
    <property type="evidence" value="ECO:0007669"/>
    <property type="project" value="UniProtKB-UniRule"/>
</dbReference>
<dbReference type="FunFam" id="3.20.20.540:FF:000001">
    <property type="entry name" value="Phosphomethylpyrimidine synthase"/>
    <property type="match status" value="1"/>
</dbReference>
<dbReference type="Gene3D" id="6.10.250.620">
    <property type="match status" value="1"/>
</dbReference>
<dbReference type="Gene3D" id="3.20.20.540">
    <property type="entry name" value="Radical SAM ThiC family, central domain"/>
    <property type="match status" value="1"/>
</dbReference>
<dbReference type="HAMAP" id="MF_00089">
    <property type="entry name" value="ThiC"/>
    <property type="match status" value="1"/>
</dbReference>
<dbReference type="InterPro" id="IPR037509">
    <property type="entry name" value="ThiC"/>
</dbReference>
<dbReference type="InterPro" id="IPR025747">
    <property type="entry name" value="ThiC-associated_dom"/>
</dbReference>
<dbReference type="InterPro" id="IPR038521">
    <property type="entry name" value="ThiC/Bza_core_dom"/>
</dbReference>
<dbReference type="InterPro" id="IPR002817">
    <property type="entry name" value="ThiC/BzaA/B"/>
</dbReference>
<dbReference type="NCBIfam" id="NF006763">
    <property type="entry name" value="PRK09284.1"/>
    <property type="match status" value="1"/>
</dbReference>
<dbReference type="NCBIfam" id="NF009895">
    <property type="entry name" value="PRK13352.1"/>
    <property type="match status" value="1"/>
</dbReference>
<dbReference type="NCBIfam" id="TIGR00190">
    <property type="entry name" value="thiC"/>
    <property type="match status" value="1"/>
</dbReference>
<dbReference type="PANTHER" id="PTHR30557:SF1">
    <property type="entry name" value="PHOSPHOMETHYLPYRIMIDINE SYNTHASE, CHLOROPLASTIC"/>
    <property type="match status" value="1"/>
</dbReference>
<dbReference type="PANTHER" id="PTHR30557">
    <property type="entry name" value="THIAMINE BIOSYNTHESIS PROTEIN THIC"/>
    <property type="match status" value="1"/>
</dbReference>
<dbReference type="Pfam" id="PF13667">
    <property type="entry name" value="ThiC-associated"/>
    <property type="match status" value="1"/>
</dbReference>
<dbReference type="Pfam" id="PF01964">
    <property type="entry name" value="ThiC_Rad_SAM"/>
    <property type="match status" value="1"/>
</dbReference>
<dbReference type="SFLD" id="SFLDF00407">
    <property type="entry name" value="phosphomethylpyrimidine_syntha"/>
    <property type="match status" value="1"/>
</dbReference>
<dbReference type="SFLD" id="SFLDG01114">
    <property type="entry name" value="phosphomethylpyrimidine_syntha"/>
    <property type="match status" value="1"/>
</dbReference>
<dbReference type="SFLD" id="SFLDS00113">
    <property type="entry name" value="Radical_SAM_Phosphomethylpyrim"/>
    <property type="match status" value="1"/>
</dbReference>
<sequence length="631" mass="70793">MNQLTNLSPADLSAQHEQDAKDLTRILPASTKVYIQGSRPDIQVPMRQIALTDTPTGLGGEKNPPVMVYDTSGVYTDPEVAIDLNKGLPHVRQAWIEERQDTDVLDTLSSSFGQERLKDIRTADIRFAHIQKPRRAKTGQNVTQMHYAKKGMITPEMEYIAIRENQRQRDEVDMRQHAGQNFGAKNLTEITPEFVRQEVAAGRAIIPANINHPEIEPMIIGRNFLVKINANIGNSALGSSIDEEVSKMTWATRWGADTIMDLSTGKNIHETREWIIRNSPVPIGTVPIYQALEKVDGVAEDLTWEIFKDTLIEQAEQGVDYFTIHAGVLLRYVPLTANRLTGIVSRGGSIMAQWCLAHHEENFLYTHFDEICEIMKAYDVSFSLGDGLRPGCIQDANDEAQFGELRTLGELTHRAWEHDVQVMIEGPGHVPMHMIKENMDLQLEVCKEAPFYTLGPLTTDIAPGYDHITSAIGAAMIGWYGTAMLCYVTPKEHLGLPNKKDVKDGIITYKIAAHAADLAKGHPGAQVRDNALSKARFEFRWDDQFNLSLDPDTARSMHDETLPKEAHKSAHFCSMCGPKFCSMKITQNVRNYAQNQETAKDFNPSTEEVEQGLKSMKQAYHDNGQKLYQKV</sequence>
<protein>
    <recommendedName>
        <fullName evidence="1">Phosphomethylpyrimidine synthase</fullName>
        <ecNumber evidence="1">4.1.99.17</ecNumber>
    </recommendedName>
    <alternativeName>
        <fullName evidence="1">Hydroxymethylpyrimidine phosphate synthase</fullName>
        <shortName evidence="1">HMP-P synthase</shortName>
        <shortName evidence="1">HMP-phosphate synthase</shortName>
        <shortName evidence="1">HMPP synthase</shortName>
    </alternativeName>
    <alternativeName>
        <fullName evidence="1">Thiamine biosynthesis protein ThiC</fullName>
    </alternativeName>
</protein>
<name>THIC_ACIAD</name>